<organism>
    <name type="scientific">Arabidopsis thaliana</name>
    <name type="common">Mouse-ear cress</name>
    <dbReference type="NCBI Taxonomy" id="3702"/>
    <lineage>
        <taxon>Eukaryota</taxon>
        <taxon>Viridiplantae</taxon>
        <taxon>Streptophyta</taxon>
        <taxon>Embryophyta</taxon>
        <taxon>Tracheophyta</taxon>
        <taxon>Spermatophyta</taxon>
        <taxon>Magnoliopsida</taxon>
        <taxon>eudicotyledons</taxon>
        <taxon>Gunneridae</taxon>
        <taxon>Pentapetalae</taxon>
        <taxon>rosids</taxon>
        <taxon>malvids</taxon>
        <taxon>Brassicales</taxon>
        <taxon>Brassicaceae</taxon>
        <taxon>Camelineae</taxon>
        <taxon>Arabidopsis</taxon>
    </lineage>
</organism>
<comment type="function">
    <text evidence="4 5">Involved in target of rapamycin (TOR)-regulated translation control, especially under energy-deficient conditions (PubMed:29084871). Involved in the regulation of the ethylene-mediated signaling pathway (PubMed:21631530). Involved in salt stress responses (PubMed:21631530). Reduced cotyledons size and early flowering (PubMed:21631530).</text>
</comment>
<comment type="subunit">
    <text evidence="4 5">Interacts with EIN2, ETR2 and EIN4 (PubMed:21631530). Binds to EIF4A1 (PubMed:29084871). The association with ribosomes is modulated by cellular energy status and TOR activity (PubMed:29084871).</text>
</comment>
<comment type="subcellular location">
    <subcellularLocation>
        <location evidence="2">Nucleus</location>
    </subcellularLocation>
    <subcellularLocation>
        <location evidence="4 5">Cytoplasm</location>
        <location evidence="4 5">Cytosol</location>
    </subcellularLocation>
</comment>
<comment type="tissue specificity">
    <text evidence="4 5">Mostly expressed in vegetative tissues, such as leaves and stems, and, to a lower extent, in roots and reproductive tissues, such as flower buds and flowers (PubMed:29084871). Expressed in seedlings, roots, cauline leaf tips and flowers (PubMed:21631530).</text>
</comment>
<comment type="developmental stage">
    <text evidence="4">In seedlings, observed in the root tips, root vascular tissues and at the junction region of hypocotyl and root. In flowers, mainly detected at the connection of petiole and stem, and in young flower buds. Also present at low levels in sepals and pistils.</text>
</comment>
<comment type="induction">
    <text evidence="5">Induced by dark and starvation but repressed by glucose feeding subsequent to starvation in a TOR-dependent manner.</text>
</comment>
<comment type="disruption phenotype">
    <text evidence="4 5">Enhanced ethylene response, but altered salt response during seed germination and plant growth leading to an increased tolerance to salt stress (PubMed:21631530). Increased susceptibility to dark and starvation, and to treatment with the TOR inhibitor (PubMed:29084871). Decreased translation activity associated with altered ribosome patterns, especially in the dark and starvation conditions, in which mRNAs distribution is altered and rRNA abnormally degraded (PubMed:29084871). Slightly early flowering time under long-day conditions (PubMed:29084871).</text>
</comment>
<comment type="similarity">
    <text evidence="9">Belongs to the PDCD4 family.</text>
</comment>
<comment type="sequence caution" evidence="9">
    <conflict type="erroneous gene model prediction">
        <sequence resource="EMBL-CDS" id="CAB41120"/>
    </conflict>
</comment>
<comment type="sequence caution" evidence="9">
    <conflict type="erroneous gene model prediction">
        <sequence resource="EMBL-CDS" id="CAB79390"/>
    </conflict>
</comment>
<feature type="chain" id="PRO_0000447576" description="MA3 DOMAIN-CONTAINING TRANSLATION REGULATORY FACTOR 3">
    <location>
        <begin position="1"/>
        <end position="702"/>
    </location>
</feature>
<feature type="domain" description="MI 1" evidence="1">
    <location>
        <begin position="116"/>
        <end position="237"/>
    </location>
</feature>
<feature type="domain" description="MI 2" evidence="1">
    <location>
        <begin position="280"/>
        <end position="401"/>
    </location>
</feature>
<feature type="domain" description="MI 3" evidence="1">
    <location>
        <begin position="414"/>
        <end position="535"/>
    </location>
</feature>
<feature type="domain" description="MI 4" evidence="1">
    <location>
        <begin position="577"/>
        <end position="697"/>
    </location>
</feature>
<feature type="region of interest" description="Disordered" evidence="3">
    <location>
        <begin position="1"/>
        <end position="100"/>
    </location>
</feature>
<feature type="short sequence motif" description="Nuclear localization signal 1" evidence="2">
    <location>
        <begin position="267"/>
        <end position="274"/>
    </location>
</feature>
<feature type="short sequence motif" description="Nuclear localization signal 2" evidence="2">
    <location>
        <begin position="615"/>
        <end position="622"/>
    </location>
</feature>
<feature type="compositionally biased region" description="Basic residues" evidence="3">
    <location>
        <begin position="53"/>
        <end position="65"/>
    </location>
</feature>
<feature type="compositionally biased region" description="Basic and acidic residues" evidence="3">
    <location>
        <begin position="81"/>
        <end position="91"/>
    </location>
</feature>
<feature type="sequence conflict" description="In Ref. 4; BAD95421." evidence="9" ref="4">
    <original>D</original>
    <variation>G</variation>
    <location>
        <position position="633"/>
    </location>
</feature>
<evidence type="ECO:0000255" key="1">
    <source>
        <dbReference type="PROSITE-ProRule" id="PRU00698"/>
    </source>
</evidence>
<evidence type="ECO:0000255" key="2">
    <source>
        <dbReference type="PROSITE-ProRule" id="PRU00768"/>
    </source>
</evidence>
<evidence type="ECO:0000256" key="3">
    <source>
        <dbReference type="SAM" id="MobiDB-lite"/>
    </source>
</evidence>
<evidence type="ECO:0000269" key="4">
    <source>
    </source>
</evidence>
<evidence type="ECO:0000269" key="5">
    <source>
    </source>
</evidence>
<evidence type="ECO:0000303" key="6">
    <source>
    </source>
</evidence>
<evidence type="ECO:0000303" key="7">
    <source>
    </source>
</evidence>
<evidence type="ECO:0000303" key="8">
    <source>
    </source>
</evidence>
<evidence type="ECO:0000305" key="9"/>
<evidence type="ECO:0000312" key="10">
    <source>
        <dbReference type="Araport" id="AT4G24800"/>
    </source>
</evidence>
<evidence type="ECO:0000312" key="11">
    <source>
        <dbReference type="EMBL" id="CAB41120.1"/>
    </source>
</evidence>
<sequence length="702" mass="77436">MEGFLTDQQREMMKVATQTADDLPPSQKPHSVLLEHLPKPSGGGKASGASNAVKHRRSHAGRSIRSKKDGGGGKGNWGKLIDTDGDYHIDPNDPNYDSGEEPFELVGATLSDPLDDYKKAAASIINEYFSTGDVDVAAADLIELGSSEYHPYFIKRLVSVAMDRHDKEKEMASVLLSALYADVINPNQIRDGFVLLLESADDFVVDIPDAVNVLALFLARAVVDDILPPAFLPRAAKALPITSKGYQVVQTAEKSYLSAAHHAELVERRWGGQTRTTVEEVKKKIADILNEYVETGETYEACRCVRELGVSFFHHEVVKRALVTALENHAAEAPVLKLLNEAASENLISSSQMVKGFSRLRESLDDLALDIPSARTKFGLIVPKAVSGGWLDASFGYPSGECGRQQNEDEKLKRFKEDIVTIIHEYFNSDDIPELIRSLEDLGAPEYNPIFLKKLITLALDRKNHEKEMASVLLSSLHIEMFTTEDVADGFVMLLESAEDTALDILDASNELALFLARAVIDDVLAPFNLEEISSKLRPNSSGTETVKMARSLIFARHAGERLLRCWGGGSGWAVEDAKDKISNLLEEYESSGLVSEACKCIHELGMPFFNHEVVKKALVMGMEKKKDKMMLDLLQESFSEGLITTNQMTKGFTRVKDGLEDLALDIPNAKEKFNDYVEYGKKNGWVSSSFLTSLTEDANVG</sequence>
<proteinExistence type="evidence at protein level"/>
<gene>
    <name evidence="8" type="primary">MRF3</name>
    <name evidence="6" type="synonym">ECIP1</name>
    <name evidence="7" type="synonym">MAT5</name>
    <name evidence="10" type="ordered locus">At4g24800</name>
    <name evidence="11" type="ORF">F6I7.10</name>
</gene>
<keyword id="KW-0963">Cytoplasm</keyword>
<keyword id="KW-0936">Ethylene signaling pathway</keyword>
<keyword id="KW-0539">Nucleus</keyword>
<keyword id="KW-1185">Reference proteome</keyword>
<keyword id="KW-0677">Repeat</keyword>
<keyword id="KW-0346">Stress response</keyword>
<keyword id="KW-0810">Translation regulation</keyword>
<name>MRF3_ARATH</name>
<protein>
    <recommendedName>
        <fullName evidence="8">MA3 DOMAIN-CONTAINING TRANSLATION REGULATORY FACTOR 3</fullName>
    </recommendedName>
    <alternativeName>
        <fullName evidence="6">EIN2 C-terminus interacting protein 1</fullName>
    </alternativeName>
    <alternativeName>
        <fullName evidence="7">MA3 domain-containing protein 5</fullName>
    </alternativeName>
</protein>
<reference key="1">
    <citation type="journal article" date="1999" name="Nature">
        <title>Sequence and analysis of chromosome 4 of the plant Arabidopsis thaliana.</title>
        <authorList>
            <person name="Mayer K.F.X."/>
            <person name="Schueller C."/>
            <person name="Wambutt R."/>
            <person name="Murphy G."/>
            <person name="Volckaert G."/>
            <person name="Pohl T."/>
            <person name="Duesterhoeft A."/>
            <person name="Stiekema W."/>
            <person name="Entian K.-D."/>
            <person name="Terryn N."/>
            <person name="Harris B."/>
            <person name="Ansorge W."/>
            <person name="Brandt P."/>
            <person name="Grivell L.A."/>
            <person name="Rieger M."/>
            <person name="Weichselgartner M."/>
            <person name="de Simone V."/>
            <person name="Obermaier B."/>
            <person name="Mache R."/>
            <person name="Mueller M."/>
            <person name="Kreis M."/>
            <person name="Delseny M."/>
            <person name="Puigdomenech P."/>
            <person name="Watson M."/>
            <person name="Schmidtheini T."/>
            <person name="Reichert B."/>
            <person name="Portetelle D."/>
            <person name="Perez-Alonso M."/>
            <person name="Boutry M."/>
            <person name="Bancroft I."/>
            <person name="Vos P."/>
            <person name="Hoheisel J."/>
            <person name="Zimmermann W."/>
            <person name="Wedler H."/>
            <person name="Ridley P."/>
            <person name="Langham S.-A."/>
            <person name="McCullagh B."/>
            <person name="Bilham L."/>
            <person name="Robben J."/>
            <person name="van der Schueren J."/>
            <person name="Grymonprez B."/>
            <person name="Chuang Y.-J."/>
            <person name="Vandenbussche F."/>
            <person name="Braeken M."/>
            <person name="Weltjens I."/>
            <person name="Voet M."/>
            <person name="Bastiaens I."/>
            <person name="Aert R."/>
            <person name="Defoor E."/>
            <person name="Weitzenegger T."/>
            <person name="Bothe G."/>
            <person name="Ramsperger U."/>
            <person name="Hilbert H."/>
            <person name="Braun M."/>
            <person name="Holzer E."/>
            <person name="Brandt A."/>
            <person name="Peters S."/>
            <person name="van Staveren M."/>
            <person name="Dirkse W."/>
            <person name="Mooijman P."/>
            <person name="Klein Lankhorst R."/>
            <person name="Rose M."/>
            <person name="Hauf J."/>
            <person name="Koetter P."/>
            <person name="Berneiser S."/>
            <person name="Hempel S."/>
            <person name="Feldpausch M."/>
            <person name="Lamberth S."/>
            <person name="Van den Daele H."/>
            <person name="De Keyser A."/>
            <person name="Buysshaert C."/>
            <person name="Gielen J."/>
            <person name="Villarroel R."/>
            <person name="De Clercq R."/>
            <person name="van Montagu M."/>
            <person name="Rogers J."/>
            <person name="Cronin A."/>
            <person name="Quail M.A."/>
            <person name="Bray-Allen S."/>
            <person name="Clark L."/>
            <person name="Doggett J."/>
            <person name="Hall S."/>
            <person name="Kay M."/>
            <person name="Lennard N."/>
            <person name="McLay K."/>
            <person name="Mayes R."/>
            <person name="Pettett A."/>
            <person name="Rajandream M.A."/>
            <person name="Lyne M."/>
            <person name="Benes V."/>
            <person name="Rechmann S."/>
            <person name="Borkova D."/>
            <person name="Bloecker H."/>
            <person name="Scharfe M."/>
            <person name="Grimm M."/>
            <person name="Loehnert T.-H."/>
            <person name="Dose S."/>
            <person name="de Haan M."/>
            <person name="Maarse A.C."/>
            <person name="Schaefer M."/>
            <person name="Mueller-Auer S."/>
            <person name="Gabel C."/>
            <person name="Fuchs M."/>
            <person name="Fartmann B."/>
            <person name="Granderath K."/>
            <person name="Dauner D."/>
            <person name="Herzl A."/>
            <person name="Neumann S."/>
            <person name="Argiriou A."/>
            <person name="Vitale D."/>
            <person name="Liguori R."/>
            <person name="Piravandi E."/>
            <person name="Massenet O."/>
            <person name="Quigley F."/>
            <person name="Clabauld G."/>
            <person name="Muendlein A."/>
            <person name="Felber R."/>
            <person name="Schnabl S."/>
            <person name="Hiller R."/>
            <person name="Schmidt W."/>
            <person name="Lecharny A."/>
            <person name="Aubourg S."/>
            <person name="Chefdor F."/>
            <person name="Cooke R."/>
            <person name="Berger C."/>
            <person name="Monfort A."/>
            <person name="Casacuberta E."/>
            <person name="Gibbons T."/>
            <person name="Weber N."/>
            <person name="Vandenbol M."/>
            <person name="Bargues M."/>
            <person name="Terol J."/>
            <person name="Torres A."/>
            <person name="Perez-Perez A."/>
            <person name="Purnelle B."/>
            <person name="Bent E."/>
            <person name="Johnson S."/>
            <person name="Tacon D."/>
            <person name="Jesse T."/>
            <person name="Heijnen L."/>
            <person name="Schwarz S."/>
            <person name="Scholler P."/>
            <person name="Heber S."/>
            <person name="Francs P."/>
            <person name="Bielke C."/>
            <person name="Frishman D."/>
            <person name="Haase D."/>
            <person name="Lemcke K."/>
            <person name="Mewes H.-W."/>
            <person name="Stocker S."/>
            <person name="Zaccaria P."/>
            <person name="Bevan M."/>
            <person name="Wilson R.K."/>
            <person name="de la Bastide M."/>
            <person name="Habermann K."/>
            <person name="Parnell L."/>
            <person name="Dedhia N."/>
            <person name="Gnoj L."/>
            <person name="Schutz K."/>
            <person name="Huang E."/>
            <person name="Spiegel L."/>
            <person name="Sekhon M."/>
            <person name="Murray J."/>
            <person name="Sheet P."/>
            <person name="Cordes M."/>
            <person name="Abu-Threideh J."/>
            <person name="Stoneking T."/>
            <person name="Kalicki J."/>
            <person name="Graves T."/>
            <person name="Harmon G."/>
            <person name="Edwards J."/>
            <person name="Latreille P."/>
            <person name="Courtney L."/>
            <person name="Cloud J."/>
            <person name="Abbott A."/>
            <person name="Scott K."/>
            <person name="Johnson D."/>
            <person name="Minx P."/>
            <person name="Bentley D."/>
            <person name="Fulton B."/>
            <person name="Miller N."/>
            <person name="Greco T."/>
            <person name="Kemp K."/>
            <person name="Kramer J."/>
            <person name="Fulton L."/>
            <person name="Mardis E."/>
            <person name="Dante M."/>
            <person name="Pepin K."/>
            <person name="Hillier L.W."/>
            <person name="Nelson J."/>
            <person name="Spieth J."/>
            <person name="Ryan E."/>
            <person name="Andrews S."/>
            <person name="Geisel C."/>
            <person name="Layman D."/>
            <person name="Du H."/>
            <person name="Ali J."/>
            <person name="Berghoff A."/>
            <person name="Jones K."/>
            <person name="Drone K."/>
            <person name="Cotton M."/>
            <person name="Joshu C."/>
            <person name="Antonoiu B."/>
            <person name="Zidanic M."/>
            <person name="Strong C."/>
            <person name="Sun H."/>
            <person name="Lamar B."/>
            <person name="Yordan C."/>
            <person name="Ma P."/>
            <person name="Zhong J."/>
            <person name="Preston R."/>
            <person name="Vil D."/>
            <person name="Shekher M."/>
            <person name="Matero A."/>
            <person name="Shah R."/>
            <person name="Swaby I.K."/>
            <person name="O'Shaughnessy A."/>
            <person name="Rodriguez M."/>
            <person name="Hoffman J."/>
            <person name="Till S."/>
            <person name="Granat S."/>
            <person name="Shohdy N."/>
            <person name="Hasegawa A."/>
            <person name="Hameed A."/>
            <person name="Lodhi M."/>
            <person name="Johnson A."/>
            <person name="Chen E."/>
            <person name="Marra M.A."/>
            <person name="Martienssen R."/>
            <person name="McCombie W.R."/>
        </authorList>
    </citation>
    <scope>NUCLEOTIDE SEQUENCE [LARGE SCALE GENOMIC DNA]</scope>
    <source>
        <strain>cv. Columbia</strain>
    </source>
</reference>
<reference key="2">
    <citation type="journal article" date="2017" name="Plant J.">
        <title>Araport11: a complete reannotation of the Arabidopsis thaliana reference genome.</title>
        <authorList>
            <person name="Cheng C.Y."/>
            <person name="Krishnakumar V."/>
            <person name="Chan A.P."/>
            <person name="Thibaud-Nissen F."/>
            <person name="Schobel S."/>
            <person name="Town C.D."/>
        </authorList>
    </citation>
    <scope>GENOME REANNOTATION</scope>
    <source>
        <strain>cv. Columbia</strain>
    </source>
</reference>
<reference key="3">
    <citation type="journal article" date="2003" name="Science">
        <title>Empirical analysis of transcriptional activity in the Arabidopsis genome.</title>
        <authorList>
            <person name="Yamada K."/>
            <person name="Lim J."/>
            <person name="Dale J.M."/>
            <person name="Chen H."/>
            <person name="Shinn P."/>
            <person name="Palm C.J."/>
            <person name="Southwick A.M."/>
            <person name="Wu H.C."/>
            <person name="Kim C.J."/>
            <person name="Nguyen M."/>
            <person name="Pham P.K."/>
            <person name="Cheuk R.F."/>
            <person name="Karlin-Newmann G."/>
            <person name="Liu S.X."/>
            <person name="Lam B."/>
            <person name="Sakano H."/>
            <person name="Wu T."/>
            <person name="Yu G."/>
            <person name="Miranda M."/>
            <person name="Quach H.L."/>
            <person name="Tripp M."/>
            <person name="Chang C.H."/>
            <person name="Lee J.M."/>
            <person name="Toriumi M.J."/>
            <person name="Chan M.M."/>
            <person name="Tang C.C."/>
            <person name="Onodera C.S."/>
            <person name="Deng J.M."/>
            <person name="Akiyama K."/>
            <person name="Ansari Y."/>
            <person name="Arakawa T."/>
            <person name="Banh J."/>
            <person name="Banno F."/>
            <person name="Bowser L."/>
            <person name="Brooks S.Y."/>
            <person name="Carninci P."/>
            <person name="Chao Q."/>
            <person name="Choy N."/>
            <person name="Enju A."/>
            <person name="Goldsmith A.D."/>
            <person name="Gurjal M."/>
            <person name="Hansen N.F."/>
            <person name="Hayashizaki Y."/>
            <person name="Johnson-Hopson C."/>
            <person name="Hsuan V.W."/>
            <person name="Iida K."/>
            <person name="Karnes M."/>
            <person name="Khan S."/>
            <person name="Koesema E."/>
            <person name="Ishida J."/>
            <person name="Jiang P.X."/>
            <person name="Jones T."/>
            <person name="Kawai J."/>
            <person name="Kamiya A."/>
            <person name="Meyers C."/>
            <person name="Nakajima M."/>
            <person name="Narusaka M."/>
            <person name="Seki M."/>
            <person name="Sakurai T."/>
            <person name="Satou M."/>
            <person name="Tamse R."/>
            <person name="Vaysberg M."/>
            <person name="Wallender E.K."/>
            <person name="Wong C."/>
            <person name="Yamamura Y."/>
            <person name="Yuan S."/>
            <person name="Shinozaki K."/>
            <person name="Davis R.W."/>
            <person name="Theologis A."/>
            <person name="Ecker J.R."/>
        </authorList>
    </citation>
    <scope>NUCLEOTIDE SEQUENCE [LARGE SCALE MRNA]</scope>
    <source>
        <strain>cv. Columbia</strain>
    </source>
</reference>
<reference key="4">
    <citation type="submission" date="2005-03" db="EMBL/GenBank/DDBJ databases">
        <title>Large-scale analysis of RIKEN Arabidopsis full-length (RAFL) cDNAs.</title>
        <authorList>
            <person name="Totoki Y."/>
            <person name="Seki M."/>
            <person name="Ishida J."/>
            <person name="Nakajima M."/>
            <person name="Enju A."/>
            <person name="Kamiya A."/>
            <person name="Narusaka M."/>
            <person name="Shin-i T."/>
            <person name="Nakagawa M."/>
            <person name="Sakamoto N."/>
            <person name="Oishi K."/>
            <person name="Kohara Y."/>
            <person name="Kobayashi M."/>
            <person name="Toyoda A."/>
            <person name="Sakaki Y."/>
            <person name="Sakurai T."/>
            <person name="Iida K."/>
            <person name="Akiyama K."/>
            <person name="Satou M."/>
            <person name="Toyoda T."/>
            <person name="Konagaya A."/>
            <person name="Carninci P."/>
            <person name="Kawai J."/>
            <person name="Hayashizaki Y."/>
            <person name="Shinozaki K."/>
        </authorList>
    </citation>
    <scope>NUCLEOTIDE SEQUENCE [LARGE SCALE MRNA]</scope>
    <source>
        <strain>cv. Columbia</strain>
    </source>
</reference>
<reference key="5">
    <citation type="journal article" date="2011" name="Plant Cell Environ.">
        <title>EIN2 regulates salt stress response and interacts with a MA3 domain-containing protein ECIP1 in Arabidopsis.</title>
        <authorList>
            <person name="Lei G."/>
            <person name="Shen M."/>
            <person name="Li Z.G."/>
            <person name="Zhang B."/>
            <person name="Duan K.X."/>
            <person name="Wang N."/>
            <person name="Cao Y.R."/>
            <person name="Zhang W.K."/>
            <person name="Ma B."/>
            <person name="Ling H.Q."/>
            <person name="Chen S.Y."/>
            <person name="Zhang J.S."/>
        </authorList>
    </citation>
    <scope>FUNCTION</scope>
    <scope>DISRUPTION PHENOTYPE</scope>
    <scope>INTERACTION WITH EIN2; ETR2 AND EIN4</scope>
    <scope>SUBCELLULAR LOCATION</scope>
    <scope>TISSUE SPECIFICITY</scope>
    <scope>DEVELOPMENTAL STAGE</scope>
    <source>
        <strain>cv. Columbia</strain>
    </source>
</reference>
<reference key="6">
    <citation type="journal article" date="2012" name="Mol. Cell. Proteomics">
        <title>Comparative large-scale characterisation of plant vs. mammal proteins reveals similar and idiosyncratic N-alpha acetylation features.</title>
        <authorList>
            <person name="Bienvenut W.V."/>
            <person name="Sumpton D."/>
            <person name="Martinez A."/>
            <person name="Lilla S."/>
            <person name="Espagne C."/>
            <person name="Meinnel T."/>
            <person name="Giglione C."/>
        </authorList>
    </citation>
    <scope>IDENTIFICATION BY MASS SPECTROMETRY [LARGE SCALE ANALYSIS]</scope>
</reference>
<reference key="7">
    <citation type="journal article" date="2013" name="BMC Evol. Biol.">
        <title>The unique evolution of the programmed cell death 4 protein in plants.</title>
        <authorList>
            <person name="Cheng S."/>
            <person name="Liu R."/>
            <person name="Gallie D.R."/>
        </authorList>
    </citation>
    <scope>GENE FAMILY</scope>
</reference>
<reference key="8">
    <citation type="journal article" date="2017" name="Plant Cell">
        <title>MRF family genes are involved in translation control, especially under energy-deficient conditions, and their expression and functions are modulated by the TOR signaling pathway.</title>
        <authorList>
            <person name="Lee D.-H."/>
            <person name="Park S.J."/>
            <person name="Ahn C.S."/>
            <person name="Pai H.-S."/>
        </authorList>
    </citation>
    <scope>FUNCTION</scope>
    <scope>DISRUPTION PHENOTYPE</scope>
    <scope>INDUCTION BY DARK AND STARVATION</scope>
    <scope>TISSUE SPECIFICITY</scope>
    <scope>INTERACTION WITH EIF4A1 AND RIBOSOMES</scope>
    <scope>SUBCELLULAR LOCATION</scope>
    <scope>GENE FAMILY</scope>
    <scope>NOMENCLATURE</scope>
    <source>
        <strain>cv. Columbia</strain>
    </source>
</reference>
<accession>Q8W4Q4</accession>
<accession>A0A178V3H6</accession>
<accession>Q56XH1</accession>
<accession>Q9SZX0</accession>
<dbReference type="EMBL" id="AL049657">
    <property type="protein sequence ID" value="CAB41120.1"/>
    <property type="status" value="ALT_SEQ"/>
    <property type="molecule type" value="Genomic_DNA"/>
</dbReference>
<dbReference type="EMBL" id="AL161562">
    <property type="protein sequence ID" value="CAB79390.1"/>
    <property type="status" value="ALT_SEQ"/>
    <property type="molecule type" value="Genomic_DNA"/>
</dbReference>
<dbReference type="EMBL" id="CP002687">
    <property type="protein sequence ID" value="AEE84959.1"/>
    <property type="molecule type" value="Genomic_DNA"/>
</dbReference>
<dbReference type="EMBL" id="CP002687">
    <property type="protein sequence ID" value="AEE84960.1"/>
    <property type="molecule type" value="Genomic_DNA"/>
</dbReference>
<dbReference type="EMBL" id="CP002687">
    <property type="protein sequence ID" value="AEE84961.1"/>
    <property type="molecule type" value="Genomic_DNA"/>
</dbReference>
<dbReference type="EMBL" id="CP002687">
    <property type="protein sequence ID" value="ANM68168.1"/>
    <property type="molecule type" value="Genomic_DNA"/>
</dbReference>
<dbReference type="EMBL" id="AY062102">
    <property type="protein sequence ID" value="AAL32978.1"/>
    <property type="molecule type" value="mRNA"/>
</dbReference>
<dbReference type="EMBL" id="AY124878">
    <property type="protein sequence ID" value="AAM70587.1"/>
    <property type="molecule type" value="mRNA"/>
</dbReference>
<dbReference type="EMBL" id="AK221703">
    <property type="protein sequence ID" value="BAD95421.1"/>
    <property type="molecule type" value="mRNA"/>
</dbReference>
<dbReference type="PIR" id="T06664">
    <property type="entry name" value="T06664"/>
</dbReference>
<dbReference type="RefSeq" id="NP_001031708.1">
    <property type="nucleotide sequence ID" value="NM_001036631.1"/>
</dbReference>
<dbReference type="RefSeq" id="NP_001190828.1">
    <property type="nucleotide sequence ID" value="NM_001203899.1"/>
</dbReference>
<dbReference type="RefSeq" id="NP_001329945.1">
    <property type="nucleotide sequence ID" value="NM_001341710.1"/>
</dbReference>
<dbReference type="RefSeq" id="NP_567708.1">
    <property type="nucleotide sequence ID" value="NM_118613.3"/>
</dbReference>
<dbReference type="SMR" id="Q8W4Q4"/>
<dbReference type="FunCoup" id="Q8W4Q4">
    <property type="interactions" value="2332"/>
</dbReference>
<dbReference type="STRING" id="3702.Q8W4Q4"/>
<dbReference type="iPTMnet" id="Q8W4Q4"/>
<dbReference type="PaxDb" id="3702-AT4G24800.3"/>
<dbReference type="ProteomicsDB" id="185731"/>
<dbReference type="EnsemblPlants" id="AT4G24800.1">
    <property type="protein sequence ID" value="AT4G24800.1"/>
    <property type="gene ID" value="AT4G24800"/>
</dbReference>
<dbReference type="EnsemblPlants" id="AT4G24800.2">
    <property type="protein sequence ID" value="AT4G24800.2"/>
    <property type="gene ID" value="AT4G24800"/>
</dbReference>
<dbReference type="EnsemblPlants" id="AT4G24800.3">
    <property type="protein sequence ID" value="AT4G24800.3"/>
    <property type="gene ID" value="AT4G24800"/>
</dbReference>
<dbReference type="EnsemblPlants" id="AT4G24800.4">
    <property type="protein sequence ID" value="AT4G24800.4"/>
    <property type="gene ID" value="AT4G24800"/>
</dbReference>
<dbReference type="GeneID" id="828582"/>
<dbReference type="Gramene" id="AT4G24800.1">
    <property type="protein sequence ID" value="AT4G24800.1"/>
    <property type="gene ID" value="AT4G24800"/>
</dbReference>
<dbReference type="Gramene" id="AT4G24800.2">
    <property type="protein sequence ID" value="AT4G24800.2"/>
    <property type="gene ID" value="AT4G24800"/>
</dbReference>
<dbReference type="Gramene" id="AT4G24800.3">
    <property type="protein sequence ID" value="AT4G24800.3"/>
    <property type="gene ID" value="AT4G24800"/>
</dbReference>
<dbReference type="Gramene" id="AT4G24800.4">
    <property type="protein sequence ID" value="AT4G24800.4"/>
    <property type="gene ID" value="AT4G24800"/>
</dbReference>
<dbReference type="KEGG" id="ath:AT4G24800"/>
<dbReference type="Araport" id="AT4G24800"/>
<dbReference type="TAIR" id="AT4G24800">
    <property type="gene designation" value="ECIP1"/>
</dbReference>
<dbReference type="eggNOG" id="KOG0403">
    <property type="taxonomic scope" value="Eukaryota"/>
</dbReference>
<dbReference type="HOGENOM" id="CLU_013764_0_0_1"/>
<dbReference type="InParanoid" id="Q8W4Q4"/>
<dbReference type="OMA" id="EFHPYFL"/>
<dbReference type="PhylomeDB" id="Q8W4Q4"/>
<dbReference type="PRO" id="PR:Q8W4Q4"/>
<dbReference type="Proteomes" id="UP000006548">
    <property type="component" value="Chromosome 4"/>
</dbReference>
<dbReference type="ExpressionAtlas" id="Q8W4Q4">
    <property type="expression patterns" value="baseline and differential"/>
</dbReference>
<dbReference type="GO" id="GO:0005737">
    <property type="term" value="C:cytoplasm"/>
    <property type="evidence" value="ECO:0000314"/>
    <property type="project" value="TAIR"/>
</dbReference>
<dbReference type="GO" id="GO:0005829">
    <property type="term" value="C:cytosol"/>
    <property type="evidence" value="ECO:0000314"/>
    <property type="project" value="TAIR"/>
</dbReference>
<dbReference type="GO" id="GO:0005794">
    <property type="term" value="C:Golgi apparatus"/>
    <property type="evidence" value="ECO:0007005"/>
    <property type="project" value="TAIR"/>
</dbReference>
<dbReference type="GO" id="GO:0005634">
    <property type="term" value="C:nucleus"/>
    <property type="evidence" value="ECO:0007669"/>
    <property type="project" value="UniProtKB-SubCell"/>
</dbReference>
<dbReference type="GO" id="GO:0003729">
    <property type="term" value="F:mRNA binding"/>
    <property type="evidence" value="ECO:0000314"/>
    <property type="project" value="TAIR"/>
</dbReference>
<dbReference type="GO" id="GO:0043022">
    <property type="term" value="F:ribosome binding"/>
    <property type="evidence" value="ECO:0000314"/>
    <property type="project" value="UniProtKB"/>
</dbReference>
<dbReference type="GO" id="GO:0009873">
    <property type="term" value="P:ethylene-activated signaling pathway"/>
    <property type="evidence" value="ECO:0007669"/>
    <property type="project" value="UniProtKB-KW"/>
</dbReference>
<dbReference type="GO" id="GO:0045892">
    <property type="term" value="P:negative regulation of DNA-templated transcription"/>
    <property type="evidence" value="ECO:0007669"/>
    <property type="project" value="InterPro"/>
</dbReference>
<dbReference type="GO" id="GO:0006417">
    <property type="term" value="P:regulation of translation"/>
    <property type="evidence" value="ECO:0007669"/>
    <property type="project" value="UniProtKB-KW"/>
</dbReference>
<dbReference type="GO" id="GO:0009646">
    <property type="term" value="P:response to absence of light"/>
    <property type="evidence" value="ECO:0000270"/>
    <property type="project" value="TAIR"/>
</dbReference>
<dbReference type="GO" id="GO:0090549">
    <property type="term" value="P:response to carbon starvation"/>
    <property type="evidence" value="ECO:0000270"/>
    <property type="project" value="TAIR"/>
</dbReference>
<dbReference type="GO" id="GO:0009723">
    <property type="term" value="P:response to ethylene"/>
    <property type="evidence" value="ECO:0000315"/>
    <property type="project" value="TAIR"/>
</dbReference>
<dbReference type="GO" id="GO:0009651">
    <property type="term" value="P:response to salt stress"/>
    <property type="evidence" value="ECO:0000315"/>
    <property type="project" value="TAIR"/>
</dbReference>
<dbReference type="FunFam" id="1.25.40.180:FF:000008">
    <property type="entry name" value="Programmed cell death protein 4"/>
    <property type="match status" value="1"/>
</dbReference>
<dbReference type="FunFam" id="1.25.40.180:FF:000009">
    <property type="entry name" value="programmed cell death protein 4"/>
    <property type="match status" value="2"/>
</dbReference>
<dbReference type="Gene3D" id="1.25.40.180">
    <property type="match status" value="4"/>
</dbReference>
<dbReference type="InterPro" id="IPR016024">
    <property type="entry name" value="ARM-type_fold"/>
</dbReference>
<dbReference type="InterPro" id="IPR003891">
    <property type="entry name" value="Initiation_fac_eIF4g_MI"/>
</dbReference>
<dbReference type="InterPro" id="IPR039778">
    <property type="entry name" value="PDCD4"/>
</dbReference>
<dbReference type="PANTHER" id="PTHR12626">
    <property type="entry name" value="PROGRAMMED CELL DEATH 4"/>
    <property type="match status" value="1"/>
</dbReference>
<dbReference type="PANTHER" id="PTHR12626:SF0">
    <property type="entry name" value="PROGRAMMED CELL DEATH PROTEIN 4"/>
    <property type="match status" value="1"/>
</dbReference>
<dbReference type="Pfam" id="PF02847">
    <property type="entry name" value="MA3"/>
    <property type="match status" value="4"/>
</dbReference>
<dbReference type="SMART" id="SM00544">
    <property type="entry name" value="MA3"/>
    <property type="match status" value="4"/>
</dbReference>
<dbReference type="SUPFAM" id="SSF48371">
    <property type="entry name" value="ARM repeat"/>
    <property type="match status" value="4"/>
</dbReference>
<dbReference type="PROSITE" id="PS51366">
    <property type="entry name" value="MI"/>
    <property type="match status" value="4"/>
</dbReference>